<proteinExistence type="evidence at transcript level"/>
<name>BCCIP_BOVIN</name>
<accession>Q2NL37</accession>
<accession>Q1JPI1</accession>
<comment type="function">
    <text evidence="3">During interphase, required for microtubule organizing and anchoring activities. During mitosis, required for the organization and stabilization of the spindle pole. May promote cell cycle arrest by enhancing the inhibition of CDK2 activity by CDKN1A. May be required for repair of DNA damage by homologous recombination in conjunction with BRCA2. May not be involved in non-homologous end joining (NHEJ).</text>
</comment>
<comment type="subunit">
    <text evidence="3">Interacts with BRCA2, CDKN1A and MTDH/LYRIC. Interacts with DCTN1/p150-glued and ACTR1A/ARP1. Interacts with alpha-, beta- and gamma-tubulins. Interacts with TENT5C; the interaction has no effect on TENT5C poly(A) polymerase function (By similarity).</text>
</comment>
<comment type="subcellular location">
    <subcellularLocation>
        <location evidence="3">Nucleus</location>
    </subcellularLocation>
    <subcellularLocation>
        <location evidence="3">Cytoplasm</location>
        <location evidence="3">Cytoskeleton</location>
        <location evidence="3">Microtubule organizing center</location>
        <location evidence="3">Centrosome</location>
        <location evidence="3">Centriole</location>
    </subcellularLocation>
    <subcellularLocation>
        <location evidence="3">Cytoplasm</location>
        <location evidence="3">Cytoskeleton</location>
        <location evidence="3">Spindle pole</location>
    </subcellularLocation>
    <text evidence="3">Colocalizes with BRCA2 in discrete nuclear foci. In interphase, preferential localizes to the mother centriole. Recruited to the spindle pole matrix and centrosome by microtubules and dynein/dynactin activity.</text>
</comment>
<comment type="similarity">
    <text evidence="5">Belongs to the BCP1 family.</text>
</comment>
<reference key="1">
    <citation type="submission" date="2005-12" db="EMBL/GenBank/DDBJ databases">
        <authorList>
            <consortium name="NIH - Mammalian Gene Collection (MGC) project"/>
        </authorList>
    </citation>
    <scope>NUCLEOTIDE SEQUENCE [LARGE SCALE MRNA]</scope>
    <source>
        <strain>Crossbred X Angus</strain>
        <tissue>Liver</tissue>
    </source>
</reference>
<reference key="2">
    <citation type="journal article" date="2005" name="BMC Genomics">
        <title>Characterization of 954 bovine full-CDS cDNA sequences.</title>
        <authorList>
            <person name="Harhay G.P."/>
            <person name="Sonstegard T.S."/>
            <person name="Keele J.W."/>
            <person name="Heaton M.P."/>
            <person name="Clawson M.L."/>
            <person name="Snelling W.M."/>
            <person name="Wiedmann R.T."/>
            <person name="Van Tassell C.P."/>
            <person name="Smith T.P.L."/>
        </authorList>
    </citation>
    <scope>NUCLEOTIDE SEQUENCE [LARGE SCALE MRNA] OF 3-306</scope>
</reference>
<evidence type="ECO:0000250" key="1"/>
<evidence type="ECO:0000250" key="2">
    <source>
        <dbReference type="UniProtKB" id="Q9CWI3"/>
    </source>
</evidence>
<evidence type="ECO:0000250" key="3">
    <source>
        <dbReference type="UniProtKB" id="Q9P287"/>
    </source>
</evidence>
<evidence type="ECO:0000256" key="4">
    <source>
        <dbReference type="SAM" id="MobiDB-lite"/>
    </source>
</evidence>
<evidence type="ECO:0000305" key="5"/>
<protein>
    <recommendedName>
        <fullName>BRCA2 and CDKN1A-interacting protein</fullName>
    </recommendedName>
</protein>
<sequence length="306" mass="35184">MASRPKRRAVSRVPPALGDEEEEDEVEEQDEDDSDEEEDEEDEVVNEEVNIEFEAYSISDNDYDGIKKLLQQLFLKAPVNTAELTNLLIQQNHIGSVIKQTDVSEDSDDEVDEDEIFGFISLLNLTERKGTPCAEQIKELILRLCEKNCEKSMVEQLDRLFNDTARPVGFLLSERFINVPPQIALPMHQQLQKELAEAHRANKPCGKCYFYLLISKTFVEAGKSNSKKKRSNQKKDELMFANAEEEFFYEKAILKFNYSVQEESDTCLGGRWSFDDVPMKPLRTVMLIPGDKMSEIMEKLKEHLSV</sequence>
<feature type="chain" id="PRO_0000249686" description="BRCA2 and CDKN1A-interacting protein">
    <location>
        <begin position="1"/>
        <end position="306"/>
    </location>
</feature>
<feature type="region of interest" description="Disordered" evidence="4">
    <location>
        <begin position="1"/>
        <end position="45"/>
    </location>
</feature>
<feature type="region of interest" description="Interaction with BRCA2" evidence="1">
    <location>
        <begin position="51"/>
        <end position="159"/>
    </location>
</feature>
<feature type="region of interest" description="Interaction with CDKN1A" evidence="1">
    <location>
        <begin position="153"/>
        <end position="251"/>
    </location>
</feature>
<feature type="compositionally biased region" description="Basic residues" evidence="4">
    <location>
        <begin position="1"/>
        <end position="10"/>
    </location>
</feature>
<feature type="compositionally biased region" description="Acidic residues" evidence="4">
    <location>
        <begin position="18"/>
        <end position="45"/>
    </location>
</feature>
<feature type="modified residue" description="Phosphoserine" evidence="3">
    <location>
        <position position="34"/>
    </location>
</feature>
<feature type="modified residue" description="Phosphoserine" evidence="3">
    <location>
        <position position="104"/>
    </location>
</feature>
<feature type="modified residue" description="Phosphoserine" evidence="2">
    <location>
        <position position="273"/>
    </location>
</feature>
<gene>
    <name type="primary">BCCIP</name>
</gene>
<dbReference type="EMBL" id="BC111124">
    <property type="protein sequence ID" value="AAI11125.1"/>
    <property type="molecule type" value="mRNA"/>
</dbReference>
<dbReference type="EMBL" id="BT025372">
    <property type="protein sequence ID" value="ABF57328.1"/>
    <property type="molecule type" value="mRNA"/>
</dbReference>
<dbReference type="RefSeq" id="NP_001039587.1">
    <property type="nucleotide sequence ID" value="NM_001046122.2"/>
</dbReference>
<dbReference type="SMR" id="Q2NL37"/>
<dbReference type="FunCoup" id="Q2NL37">
    <property type="interactions" value="2984"/>
</dbReference>
<dbReference type="STRING" id="9913.ENSBTAP00000007617"/>
<dbReference type="PaxDb" id="9913-ENSBTAP00000007617"/>
<dbReference type="GeneID" id="512466"/>
<dbReference type="KEGG" id="bta:512466"/>
<dbReference type="CTD" id="56647"/>
<dbReference type="eggNOG" id="KOG3034">
    <property type="taxonomic scope" value="Eukaryota"/>
</dbReference>
<dbReference type="HOGENOM" id="CLU_068770_1_1_1"/>
<dbReference type="InParanoid" id="Q2NL37"/>
<dbReference type="OrthoDB" id="27543at2759"/>
<dbReference type="TreeFam" id="TF320301"/>
<dbReference type="Proteomes" id="UP000009136">
    <property type="component" value="Unplaced"/>
</dbReference>
<dbReference type="GO" id="GO:0005814">
    <property type="term" value="C:centriole"/>
    <property type="evidence" value="ECO:0000250"/>
    <property type="project" value="UniProtKB"/>
</dbReference>
<dbReference type="GO" id="GO:0005813">
    <property type="term" value="C:centrosome"/>
    <property type="evidence" value="ECO:0000250"/>
    <property type="project" value="UniProtKB"/>
</dbReference>
<dbReference type="GO" id="GO:0005737">
    <property type="term" value="C:cytoplasm"/>
    <property type="evidence" value="ECO:0007669"/>
    <property type="project" value="UniProtKB-KW"/>
</dbReference>
<dbReference type="GO" id="GO:0097431">
    <property type="term" value="C:mitotic spindle pole"/>
    <property type="evidence" value="ECO:0000250"/>
    <property type="project" value="UniProtKB"/>
</dbReference>
<dbReference type="GO" id="GO:0005634">
    <property type="term" value="C:nucleus"/>
    <property type="evidence" value="ECO:0000318"/>
    <property type="project" value="GO_Central"/>
</dbReference>
<dbReference type="GO" id="GO:0006281">
    <property type="term" value="P:DNA repair"/>
    <property type="evidence" value="ECO:0007669"/>
    <property type="project" value="UniProtKB-KW"/>
</dbReference>
<dbReference type="GO" id="GO:0034453">
    <property type="term" value="P:microtubule anchoring"/>
    <property type="evidence" value="ECO:0000250"/>
    <property type="project" value="UniProtKB"/>
</dbReference>
<dbReference type="GO" id="GO:0000226">
    <property type="term" value="P:microtubule cytoskeleton organization"/>
    <property type="evidence" value="ECO:0000250"/>
    <property type="project" value="UniProtKB"/>
</dbReference>
<dbReference type="GO" id="GO:0090307">
    <property type="term" value="P:mitotic spindle assembly"/>
    <property type="evidence" value="ECO:0000250"/>
    <property type="project" value="UniProtKB"/>
</dbReference>
<dbReference type="GO" id="GO:0007052">
    <property type="term" value="P:mitotic spindle organization"/>
    <property type="evidence" value="ECO:0000250"/>
    <property type="project" value="UniProtKB"/>
</dbReference>
<dbReference type="InterPro" id="IPR025602">
    <property type="entry name" value="BCP1_family"/>
</dbReference>
<dbReference type="PANTHER" id="PTHR13261">
    <property type="entry name" value="BRCA2 AND CDKN1A INTERACTING PROTEIN"/>
    <property type="match status" value="1"/>
</dbReference>
<dbReference type="PANTHER" id="PTHR13261:SF0">
    <property type="entry name" value="BRCA2 AND CDKN1A-INTERACTING PROTEIN"/>
    <property type="match status" value="1"/>
</dbReference>
<dbReference type="Pfam" id="PF13862">
    <property type="entry name" value="BCCIP"/>
    <property type="match status" value="1"/>
</dbReference>
<dbReference type="PIRSF" id="PIRSF028983">
    <property type="entry name" value="BCP1"/>
    <property type="match status" value="1"/>
</dbReference>
<organism>
    <name type="scientific">Bos taurus</name>
    <name type="common">Bovine</name>
    <dbReference type="NCBI Taxonomy" id="9913"/>
    <lineage>
        <taxon>Eukaryota</taxon>
        <taxon>Metazoa</taxon>
        <taxon>Chordata</taxon>
        <taxon>Craniata</taxon>
        <taxon>Vertebrata</taxon>
        <taxon>Euteleostomi</taxon>
        <taxon>Mammalia</taxon>
        <taxon>Eutheria</taxon>
        <taxon>Laurasiatheria</taxon>
        <taxon>Artiodactyla</taxon>
        <taxon>Ruminantia</taxon>
        <taxon>Pecora</taxon>
        <taxon>Bovidae</taxon>
        <taxon>Bovinae</taxon>
        <taxon>Bos</taxon>
    </lineage>
</organism>
<keyword id="KW-0131">Cell cycle</keyword>
<keyword id="KW-0963">Cytoplasm</keyword>
<keyword id="KW-0206">Cytoskeleton</keyword>
<keyword id="KW-0227">DNA damage</keyword>
<keyword id="KW-0234">DNA repair</keyword>
<keyword id="KW-0539">Nucleus</keyword>
<keyword id="KW-0597">Phosphoprotein</keyword>
<keyword id="KW-1185">Reference proteome</keyword>